<name>TIC40_ARATH</name>
<reference key="1">
    <citation type="journal article" date="1997" name="DNA Res.">
        <title>Structural analysis of Arabidopsis thaliana chromosome 5. III. Sequence features of the regions of 1,191,918 bp covered by seventeen physically assigned P1 clones.</title>
        <authorList>
            <person name="Nakamura Y."/>
            <person name="Sato S."/>
            <person name="Kaneko T."/>
            <person name="Kotani H."/>
            <person name="Asamizu E."/>
            <person name="Miyajima N."/>
            <person name="Tabata S."/>
        </authorList>
    </citation>
    <scope>NUCLEOTIDE SEQUENCE [LARGE SCALE GENOMIC DNA]</scope>
    <source>
        <strain>cv. Columbia</strain>
    </source>
</reference>
<reference key="2">
    <citation type="journal article" date="2017" name="Plant J.">
        <title>Araport11: a complete reannotation of the Arabidopsis thaliana reference genome.</title>
        <authorList>
            <person name="Cheng C.Y."/>
            <person name="Krishnakumar V."/>
            <person name="Chan A.P."/>
            <person name="Thibaud-Nissen F."/>
            <person name="Schobel S."/>
            <person name="Town C.D."/>
        </authorList>
    </citation>
    <scope>GENOME REANNOTATION</scope>
    <source>
        <strain>cv. Columbia</strain>
    </source>
</reference>
<reference key="3">
    <citation type="journal article" date="2003" name="Science">
        <title>Empirical analysis of transcriptional activity in the Arabidopsis genome.</title>
        <authorList>
            <person name="Yamada K."/>
            <person name="Lim J."/>
            <person name="Dale J.M."/>
            <person name="Chen H."/>
            <person name="Shinn P."/>
            <person name="Palm C.J."/>
            <person name="Southwick A.M."/>
            <person name="Wu H.C."/>
            <person name="Kim C.J."/>
            <person name="Nguyen M."/>
            <person name="Pham P.K."/>
            <person name="Cheuk R.F."/>
            <person name="Karlin-Newmann G."/>
            <person name="Liu S.X."/>
            <person name="Lam B."/>
            <person name="Sakano H."/>
            <person name="Wu T."/>
            <person name="Yu G."/>
            <person name="Miranda M."/>
            <person name="Quach H.L."/>
            <person name="Tripp M."/>
            <person name="Chang C.H."/>
            <person name="Lee J.M."/>
            <person name="Toriumi M.J."/>
            <person name="Chan M.M."/>
            <person name="Tang C.C."/>
            <person name="Onodera C.S."/>
            <person name="Deng J.M."/>
            <person name="Akiyama K."/>
            <person name="Ansari Y."/>
            <person name="Arakawa T."/>
            <person name="Banh J."/>
            <person name="Banno F."/>
            <person name="Bowser L."/>
            <person name="Brooks S.Y."/>
            <person name="Carninci P."/>
            <person name="Chao Q."/>
            <person name="Choy N."/>
            <person name="Enju A."/>
            <person name="Goldsmith A.D."/>
            <person name="Gurjal M."/>
            <person name="Hansen N.F."/>
            <person name="Hayashizaki Y."/>
            <person name="Johnson-Hopson C."/>
            <person name="Hsuan V.W."/>
            <person name="Iida K."/>
            <person name="Karnes M."/>
            <person name="Khan S."/>
            <person name="Koesema E."/>
            <person name="Ishida J."/>
            <person name="Jiang P.X."/>
            <person name="Jones T."/>
            <person name="Kawai J."/>
            <person name="Kamiya A."/>
            <person name="Meyers C."/>
            <person name="Nakajima M."/>
            <person name="Narusaka M."/>
            <person name="Seki M."/>
            <person name="Sakurai T."/>
            <person name="Satou M."/>
            <person name="Tamse R."/>
            <person name="Vaysberg M."/>
            <person name="Wallender E.K."/>
            <person name="Wong C."/>
            <person name="Yamamura Y."/>
            <person name="Yuan S."/>
            <person name="Shinozaki K."/>
            <person name="Davis R.W."/>
            <person name="Theologis A."/>
            <person name="Ecker J.R."/>
        </authorList>
    </citation>
    <scope>NUCLEOTIDE SEQUENCE [LARGE SCALE MRNA]</scope>
    <source>
        <strain>cv. Columbia</strain>
    </source>
</reference>
<reference key="4">
    <citation type="journal article" date="2003" name="EMBO J.">
        <title>Tic40, a membrane-anchored co-chaperone homolog in the chloroplast protein translocon.</title>
        <authorList>
            <person name="Chou M.L."/>
            <person name="Fitzpatrick L.M."/>
            <person name="Tu S.L."/>
            <person name="Budziszewski G."/>
            <person name="Potter-Lewis S."/>
            <person name="Akita M."/>
            <person name="Levin J.Z."/>
            <person name="Keegstra K."/>
            <person name="Li H.M."/>
        </authorList>
    </citation>
    <scope>FUNCTION</scope>
    <scope>SUBCELLULAR LOCATION</scope>
    <scope>TOPOLOGY</scope>
    <scope>DISRUPTION PHENOTYPE</scope>
</reference>
<reference key="5">
    <citation type="journal article" date="2004" name="J. Biol. Chem.">
        <title>The protein translocon of the plastid envelopes.</title>
        <authorList>
            <person name="Vojta A."/>
            <person name="Alavi M."/>
            <person name="Becker T."/>
            <person name="Hoermann F."/>
            <person name="Kuechler M."/>
            <person name="Soll J."/>
            <person name="Thomson R."/>
            <person name="Schleiff E."/>
        </authorList>
    </citation>
    <scope>TISSUE SPECIFICITY</scope>
</reference>
<reference key="6">
    <citation type="journal article" date="2005" name="Plant Cell">
        <title>Arabidopsis tic110 is essential for the assembly and function of the protein import machinery of plastids.</title>
        <authorList>
            <person name="Inaba T."/>
            <person name="Alvarez-Huerta M."/>
            <person name="Li M."/>
            <person name="Bauer J."/>
            <person name="Ewers C."/>
            <person name="Kessler F."/>
            <person name="Schnell D.J."/>
        </authorList>
    </citation>
    <scope>FUNCTION</scope>
    <scope>INTERACTION WITH TIC110</scope>
</reference>
<reference key="7">
    <citation type="journal article" date="2005" name="Plant J.">
        <title>In vivo studies on the roles of Tic110, Tic40 and Hsp93 during chloroplast protein import.</title>
        <authorList>
            <person name="Kovacheva S."/>
            <person name="Bedard J."/>
            <person name="Patel R."/>
            <person name="Dudley P."/>
            <person name="Twell D."/>
            <person name="Rios G."/>
            <person name="Koncz C."/>
            <person name="Jarvis P."/>
        </authorList>
    </citation>
    <scope>FUNCTION</scope>
    <scope>TISSUE SPECIFICITY</scope>
    <scope>DEVELOPMENTAL STAGE</scope>
    <scope>DISRUPTION PHENOTYPE</scope>
</reference>
<reference key="8">
    <citation type="journal article" date="2006" name="J. Cell Biol.">
        <title>Reconstitution of protein targeting to the inner envelope membrane of chloroplasts.</title>
        <authorList>
            <person name="Li M."/>
            <person name="Schnell D.J."/>
        </authorList>
    </citation>
    <scope>SUBCELLULAR LOCATION</scope>
    <scope>PROTEOLYTIC PROCESSING</scope>
    <scope>TOPOLOGY</scope>
</reference>
<reference key="9">
    <citation type="journal article" date="2006" name="J. Cell Biol.">
        <title>Stimulation of transit-peptide release and ATP hydrolysis by a cochaperone during protein import into chloroplasts.</title>
        <authorList>
            <person name="Chou M.L."/>
            <person name="Chu C.C."/>
            <person name="Chen L.J."/>
            <person name="Akita M."/>
            <person name="Li H.M."/>
        </authorList>
    </citation>
    <scope>FUNCTION</scope>
    <scope>INTERACTION WITH TIC110 AND HSP93</scope>
    <scope>MUTAGENESIS OF ASN-396; ASN-405 AND ASN-418</scope>
</reference>
<reference key="10">
    <citation type="journal article" date="2007" name="J. Biol. Chem.">
        <title>Functional similarity between the chloroplast translocon component, Tic40, and the human co-chaperone, Hsp70-interacting protein (Hip).</title>
        <authorList>
            <person name="Bedard J."/>
            <person name="Kubis S."/>
            <person name="Bimanadham S."/>
            <person name="Jarvis P."/>
        </authorList>
    </citation>
    <scope>FUNCTION</scope>
    <scope>SUBCELLULAR LOCATION</scope>
    <scope>INTERACTION WITH TIC110</scope>
    <scope>DISRUPTION PHENOTYPE</scope>
</reference>
<reference key="11">
    <citation type="journal article" date="2007" name="Plant J.">
        <title>A novel serine/proline-rich domain in combination with a transmembrane domain is required for the insertion of AtTic40 into the inner envelope membrane of chloroplasts.</title>
        <authorList>
            <person name="Tripp J."/>
            <person name="Inoue K."/>
            <person name="Keegstra K."/>
            <person name="Froehlich J.E."/>
        </authorList>
    </citation>
    <scope>SUBCELLULAR LOCATION</scope>
    <scope>PROTEOLYTIC PROCESSING</scope>
</reference>
<reference key="12">
    <citation type="journal article" date="2008" name="Plant J.">
        <title>Tic40 is important for reinsertion of proteins from the chloroplast stroma into the inner membrane.</title>
        <authorList>
            <person name="Chiu C.C."/>
            <person name="Li H.M."/>
        </authorList>
    </citation>
    <scope>FUNCTION</scope>
</reference>
<reference key="13">
    <citation type="journal article" date="2011" name="Nat. Commun.">
        <title>LTD is a protein required for sorting light-harvesting chlorophyll-binding proteins to the chloroplast SRP pathway.</title>
        <authorList>
            <person name="Ouyang M."/>
            <person name="Li X."/>
            <person name="Ma J."/>
            <person name="Chi W."/>
            <person name="Xiao J."/>
            <person name="Zou M."/>
            <person name="Chen F."/>
            <person name="Lu C."/>
            <person name="Zhang L."/>
        </authorList>
    </citation>
    <scope>INTERACTION WITH LTD</scope>
</reference>
<reference key="14">
    <citation type="journal article" date="2010" name="Biochim. Biophys. Acta">
        <title>Protein import into chloroplasts: the Tic complex and its regulation.</title>
        <authorList>
            <person name="Kovacs-Bogdan E."/>
            <person name="Soll J."/>
            <person name="Bolter B."/>
        </authorList>
    </citation>
    <scope>REVIEW</scope>
</reference>
<sequence>MENLTLVSCSASSPKLLIGCNFTSSLKNPTGFSRRTPNIVLRCSKISASAQSQSPSSRPENTGEIVVVKQRSKAFASIFSSSRDQQTTSVASPSVPVPPPSSSTIGSPLFWIGVGVGLSALFSYVTSNLKKYAMQTAMKTMMNQMNTQNSQFNNSGFPSGSPFPFPFPPQTSPASSPFQSQSQSSGATVDVTATKVETPPSTKPKPTPAKDIEVDKPSVVLEASKEKKEEKNYAFEDISPEETTKESPFSNYAEVSETNSPKETRLFEDVLQNGAGPANGATASEVFQSLGGGKGGPGLSVEALEKMMEDPTVQKMVYPYLPEEMRNPETFKWMLKNPQYRQQLQDMLNNMSGSGEWDKRMTDTLKNFDLNSPEVKQQFNQIGLTPEEVISKIMENPDVAMAFQNPRVQAALMECSENPMNIMKYQNDKEVMDVFNKISQLFPGMTG</sequence>
<feature type="transit peptide" description="Chloroplast" evidence="1">
    <location>
        <begin position="1"/>
        <end position="43"/>
    </location>
</feature>
<feature type="transit peptide" description="Chloroplast; inner membrane" evidence="1">
    <location>
        <begin position="44"/>
        <end position="76"/>
    </location>
</feature>
<feature type="chain" id="PRO_0000413673" description="Protein TIC 40, chloroplastic">
    <location>
        <begin position="77"/>
        <end position="447"/>
    </location>
</feature>
<feature type="topological domain" description="Chloroplast intermembrane" evidence="1">
    <location>
        <begin position="77"/>
        <end position="104"/>
    </location>
</feature>
<feature type="transmembrane region" description="Helical" evidence="1">
    <location>
        <begin position="105"/>
        <end position="125"/>
    </location>
</feature>
<feature type="topological domain" description="Stromal" evidence="1">
    <location>
        <begin position="126"/>
        <end position="447"/>
    </location>
</feature>
<feature type="domain" description="STI1 1">
    <location>
        <begin position="310"/>
        <end position="344"/>
    </location>
</feature>
<feature type="domain" description="STI1 2">
    <location>
        <begin position="386"/>
        <end position="425"/>
    </location>
</feature>
<feature type="region of interest" description="Disordered" evidence="2">
    <location>
        <begin position="148"/>
        <end position="214"/>
    </location>
</feature>
<feature type="region of interest" description="Disordered" evidence="2">
    <location>
        <begin position="231"/>
        <end position="261"/>
    </location>
</feature>
<feature type="compositionally biased region" description="Low complexity" evidence="2">
    <location>
        <begin position="148"/>
        <end position="160"/>
    </location>
</feature>
<feature type="compositionally biased region" description="Pro residues" evidence="2">
    <location>
        <begin position="161"/>
        <end position="171"/>
    </location>
</feature>
<feature type="compositionally biased region" description="Low complexity" evidence="2">
    <location>
        <begin position="172"/>
        <end position="186"/>
    </location>
</feature>
<feature type="mutagenesis site" description="Loss of stimulation of HSP93 ATP hydrolysis." evidence="8">
    <original>N</original>
    <variation>A</variation>
    <location>
        <position position="396"/>
    </location>
</feature>
<feature type="mutagenesis site" description="Loss of stimulation of HSP93 ATP hydrolysis." evidence="8">
    <original>N</original>
    <variation>A</variation>
    <location>
        <position position="405"/>
    </location>
</feature>
<feature type="mutagenesis site" description="No effect on stimulation of HSP93 ATP hydrolysis." evidence="8">
    <original>N</original>
    <variation>A</variation>
    <location>
        <position position="418"/>
    </location>
</feature>
<feature type="helix" evidence="13">
    <location>
        <begin position="387"/>
        <end position="393"/>
    </location>
</feature>
<feature type="helix" evidence="13">
    <location>
        <begin position="397"/>
        <end position="402"/>
    </location>
</feature>
<feature type="helix" evidence="13">
    <location>
        <begin position="406"/>
        <end position="415"/>
    </location>
</feature>
<feature type="helix" evidence="13">
    <location>
        <begin position="419"/>
        <end position="421"/>
    </location>
</feature>
<feature type="helix" evidence="13">
    <location>
        <begin position="422"/>
        <end position="425"/>
    </location>
</feature>
<feature type="helix" evidence="13">
    <location>
        <begin position="429"/>
        <end position="441"/>
    </location>
</feature>
<feature type="strand" evidence="13">
    <location>
        <begin position="442"/>
        <end position="444"/>
    </location>
</feature>
<protein>
    <recommendedName>
        <fullName>Protein TIC 40, chloroplastic</fullName>
    </recommendedName>
    <alternativeName>
        <fullName>Protein PIGMENT DEFECTIVE EMBRYO 120</fullName>
    </alternativeName>
    <alternativeName>
        <fullName>Translocon at the inner envelope membrane of chloroplasts 40</fullName>
        <shortName>AtTIC40</shortName>
    </alternativeName>
</protein>
<proteinExistence type="evidence at protein level"/>
<evidence type="ECO:0000255" key="1"/>
<evidence type="ECO:0000256" key="2">
    <source>
        <dbReference type="SAM" id="MobiDB-lite"/>
    </source>
</evidence>
<evidence type="ECO:0000269" key="3">
    <source>
    </source>
</evidence>
<evidence type="ECO:0000269" key="4">
    <source>
    </source>
</evidence>
<evidence type="ECO:0000269" key="5">
    <source>
    </source>
</evidence>
<evidence type="ECO:0000269" key="6">
    <source>
    </source>
</evidence>
<evidence type="ECO:0000269" key="7">
    <source>
    </source>
</evidence>
<evidence type="ECO:0000269" key="8">
    <source>
    </source>
</evidence>
<evidence type="ECO:0000269" key="9">
    <source>
    </source>
</evidence>
<evidence type="ECO:0000269" key="10">
    <source>
    </source>
</evidence>
<evidence type="ECO:0000269" key="11">
    <source>
    </source>
</evidence>
<evidence type="ECO:0000269" key="12">
    <source>
    </source>
</evidence>
<evidence type="ECO:0007829" key="13">
    <source>
        <dbReference type="PDB" id="2LNM"/>
    </source>
</evidence>
<dbReference type="EMBL" id="AB008270">
    <property type="protein sequence ID" value="BAB10189.1"/>
    <property type="molecule type" value="Genomic_DNA"/>
</dbReference>
<dbReference type="EMBL" id="CP002688">
    <property type="protein sequence ID" value="AED92318.1"/>
    <property type="molecule type" value="Genomic_DNA"/>
</dbReference>
<dbReference type="EMBL" id="AF428299">
    <property type="protein sequence ID" value="AAL16131.1"/>
    <property type="molecule type" value="mRNA"/>
</dbReference>
<dbReference type="EMBL" id="AY093010">
    <property type="protein sequence ID" value="AAM13009.1"/>
    <property type="molecule type" value="mRNA"/>
</dbReference>
<dbReference type="EMBL" id="BT006595">
    <property type="protein sequence ID" value="AAP31939.1"/>
    <property type="molecule type" value="mRNA"/>
</dbReference>
<dbReference type="RefSeq" id="NP_197165.1">
    <property type="nucleotide sequence ID" value="NM_121668.4"/>
</dbReference>
<dbReference type="PDB" id="2LNM">
    <property type="method" value="NMR"/>
    <property type="chains" value="A=386-447"/>
</dbReference>
<dbReference type="PDBsum" id="2LNM"/>
<dbReference type="BMRB" id="Q9FMD5"/>
<dbReference type="SMR" id="Q9FMD5"/>
<dbReference type="BioGRID" id="16800">
    <property type="interactions" value="7"/>
</dbReference>
<dbReference type="FunCoup" id="Q9FMD5">
    <property type="interactions" value="1992"/>
</dbReference>
<dbReference type="IntAct" id="Q9FMD5">
    <property type="interactions" value="3"/>
</dbReference>
<dbReference type="STRING" id="3702.Q9FMD5"/>
<dbReference type="TCDB" id="3.A.9.1.2">
    <property type="family name" value="the chloroplast envelope protein translocase (cept or tic-toc) family"/>
</dbReference>
<dbReference type="GlyGen" id="Q9FMD5">
    <property type="glycosylation" value="1 site"/>
</dbReference>
<dbReference type="iPTMnet" id="Q9FMD5"/>
<dbReference type="MetOSite" id="Q9FMD5"/>
<dbReference type="PaxDb" id="3702-AT5G16620.1"/>
<dbReference type="ProteomicsDB" id="234429"/>
<dbReference type="EnsemblPlants" id="AT5G16620.1">
    <property type="protein sequence ID" value="AT5G16620.1"/>
    <property type="gene ID" value="AT5G16620"/>
</dbReference>
<dbReference type="GeneID" id="831524"/>
<dbReference type="Gramene" id="AT5G16620.1">
    <property type="protein sequence ID" value="AT5G16620.1"/>
    <property type="gene ID" value="AT5G16620"/>
</dbReference>
<dbReference type="KEGG" id="ath:AT5G16620"/>
<dbReference type="Araport" id="AT5G16620"/>
<dbReference type="TAIR" id="AT5G16620">
    <property type="gene designation" value="TIC40"/>
</dbReference>
<dbReference type="eggNOG" id="KOG1308">
    <property type="taxonomic scope" value="Eukaryota"/>
</dbReference>
<dbReference type="HOGENOM" id="CLU_038645_1_0_1"/>
<dbReference type="InParanoid" id="Q9FMD5"/>
<dbReference type="OMA" id="MQQVFKT"/>
<dbReference type="PhylomeDB" id="Q9FMD5"/>
<dbReference type="CD-CODE" id="4299E36E">
    <property type="entry name" value="Nucleolus"/>
</dbReference>
<dbReference type="EvolutionaryTrace" id="Q9FMD5"/>
<dbReference type="PRO" id="PR:Q9FMD5"/>
<dbReference type="Proteomes" id="UP000006548">
    <property type="component" value="Chromosome 5"/>
</dbReference>
<dbReference type="ExpressionAtlas" id="Q9FMD5">
    <property type="expression patterns" value="baseline and differential"/>
</dbReference>
<dbReference type="GO" id="GO:0009507">
    <property type="term" value="C:chloroplast"/>
    <property type="evidence" value="ECO:0000314"/>
    <property type="project" value="TAIR"/>
</dbReference>
<dbReference type="GO" id="GO:0009941">
    <property type="term" value="C:chloroplast envelope"/>
    <property type="evidence" value="ECO:0007005"/>
    <property type="project" value="TAIR"/>
</dbReference>
<dbReference type="GO" id="GO:0009706">
    <property type="term" value="C:chloroplast inner membrane"/>
    <property type="evidence" value="ECO:0000314"/>
    <property type="project" value="TAIR"/>
</dbReference>
<dbReference type="GO" id="GO:0009535">
    <property type="term" value="C:chloroplast thylakoid membrane"/>
    <property type="evidence" value="ECO:0007005"/>
    <property type="project" value="TAIR"/>
</dbReference>
<dbReference type="GO" id="GO:0009536">
    <property type="term" value="C:plastid"/>
    <property type="evidence" value="ECO:0007005"/>
    <property type="project" value="TAIR"/>
</dbReference>
<dbReference type="GO" id="GO:0031897">
    <property type="term" value="C:Tic complex"/>
    <property type="evidence" value="ECO:0000304"/>
    <property type="project" value="TAIR"/>
</dbReference>
<dbReference type="GO" id="GO:0009658">
    <property type="term" value="P:chloroplast organization"/>
    <property type="evidence" value="ECO:0000315"/>
    <property type="project" value="TAIR"/>
</dbReference>
<dbReference type="GO" id="GO:0045037">
    <property type="term" value="P:protein import into chloroplast stroma"/>
    <property type="evidence" value="ECO:0000315"/>
    <property type="project" value="TAIR"/>
</dbReference>
<dbReference type="FunFam" id="1.10.260.100:FF:000008">
    <property type="entry name" value="Protein TIC 40, chloroplastic"/>
    <property type="match status" value="1"/>
</dbReference>
<dbReference type="Gene3D" id="1.10.260.100">
    <property type="match status" value="1"/>
</dbReference>
<dbReference type="InterPro" id="IPR041243">
    <property type="entry name" value="STI1/HOP_DP"/>
</dbReference>
<dbReference type="InterPro" id="IPR006636">
    <property type="entry name" value="STI1_HS-bd"/>
</dbReference>
<dbReference type="PANTHER" id="PTHR47296">
    <property type="entry name" value="PROTEIN TIC 40, CHLOROPLASTIC"/>
    <property type="match status" value="1"/>
</dbReference>
<dbReference type="PANTHER" id="PTHR47296:SF1">
    <property type="entry name" value="PROTEIN TIC 40, CHLOROPLASTIC"/>
    <property type="match status" value="1"/>
</dbReference>
<dbReference type="Pfam" id="PF17830">
    <property type="entry name" value="STI1-HOP_DP"/>
    <property type="match status" value="1"/>
</dbReference>
<dbReference type="SMART" id="SM00727">
    <property type="entry name" value="STI1"/>
    <property type="match status" value="2"/>
</dbReference>
<organism>
    <name type="scientific">Arabidopsis thaliana</name>
    <name type="common">Mouse-ear cress</name>
    <dbReference type="NCBI Taxonomy" id="3702"/>
    <lineage>
        <taxon>Eukaryota</taxon>
        <taxon>Viridiplantae</taxon>
        <taxon>Streptophyta</taxon>
        <taxon>Embryophyta</taxon>
        <taxon>Tracheophyta</taxon>
        <taxon>Spermatophyta</taxon>
        <taxon>Magnoliopsida</taxon>
        <taxon>eudicotyledons</taxon>
        <taxon>Gunneridae</taxon>
        <taxon>Pentapetalae</taxon>
        <taxon>rosids</taxon>
        <taxon>malvids</taxon>
        <taxon>Brassicales</taxon>
        <taxon>Brassicaceae</taxon>
        <taxon>Camelineae</taxon>
        <taxon>Arabidopsis</taxon>
    </lineage>
</organism>
<gene>
    <name type="primary">TIC40</name>
    <name type="synonym">PDE120</name>
    <name type="ordered locus">At5g16620</name>
    <name type="ORF">MTG13.6</name>
</gene>
<accession>Q9FMD5</accession>
<keyword id="KW-0002">3D-structure</keyword>
<keyword id="KW-0150">Chloroplast</keyword>
<keyword id="KW-0472">Membrane</keyword>
<keyword id="KW-0934">Plastid</keyword>
<keyword id="KW-1001">Plastid inner membrane</keyword>
<keyword id="KW-0653">Protein transport</keyword>
<keyword id="KW-1185">Reference proteome</keyword>
<keyword id="KW-0677">Repeat</keyword>
<keyword id="KW-0809">Transit peptide</keyword>
<keyword id="KW-0812">Transmembrane</keyword>
<keyword id="KW-1133">Transmembrane helix</keyword>
<keyword id="KW-0813">Transport</keyword>
<comment type="function">
    <text evidence="3 5 6 8 9 11">Involved in protein precursor import into chloroplasts. Part of the motor complex consisting of a co-chaperone (TIC40) and a chaperone (HSP93) associated with the import channel (TIC110). Causes the release of bound transit peptides from TIC110 and stimulates ATP hydrolysis by HSP93. Involved in reinsertion of proteins from the chloroplast stroma into the inner membrane.</text>
</comment>
<comment type="subunit">
    <text evidence="6 8 9 12">Part of the Tic complex. Interacts with HSP93, TIC110 and LTD.</text>
</comment>
<comment type="interaction">
    <interactant intactId="EBI-639157">
        <id>Q9FMD5</id>
    </interactant>
    <interactant intactId="EBI-2297694">
        <id>Q9FI56</id>
        <label>CLPC1</label>
    </interactant>
    <organismsDiffer>false</organismsDiffer>
    <experiments>3</experiments>
</comment>
<comment type="interaction">
    <interactant intactId="EBI-639157">
        <id>Q9FMD5</id>
    </interactant>
    <interactant intactId="EBI-639092">
        <id>Q8LPR9</id>
        <label>TIC110</label>
    </interactant>
    <organismsDiffer>false</organismsDiffer>
    <experiments>3</experiments>
</comment>
<comment type="subcellular location">
    <subcellularLocation>
        <location evidence="3 7 9 10">Plastid</location>
        <location evidence="3 7 9 10">Chloroplast inner membrane</location>
        <topology evidence="3 7 9 10">Single-pass membrane protein</topology>
    </subcellularLocation>
</comment>
<comment type="tissue specificity">
    <text evidence="4 5">Expressed in seedlings, flowers, leaves, stems and roots.</text>
</comment>
<comment type="developmental stage">
    <text evidence="5">Expressed throughout development.</text>
</comment>
<comment type="domain">
    <text>The C-terminal half (89-105) of the Ser/Pro-rich region and the transmembrane domain are necessary and sufficient for membrane integration.</text>
</comment>
<comment type="domain">
    <text>The TPR region (238-373) interacts with TIC110.</text>
</comment>
<comment type="domain">
    <text>The STI1 2 domain (386-425) has a stimulatory effect on HSP93 ATP hydrolysis.</text>
</comment>
<comment type="disruption phenotype">
    <text evidence="3 5 9">Small and chlorotic, but not seedling lethal. Defective in chloroplast protein import.</text>
</comment>
<comment type="miscellaneous">
    <text>Inserts into the inner envelope membrane from the stroma after import from the cytoplasm. The transit peptide undergoes a two-step processing. The initial cleavage to generate the intermediate found in the stroma is mediated by the stromal processing peptidase (SPP) while the final processing step by a signal peptidase I-type (SPase I), possibly PLSP1, requires association with the inner membrane.</text>
</comment>